<comment type="function">
    <text evidence="1">Negatively regulates transcription of bacterial ribonucleotide reductase nrd genes and operons by binding to NrdR-boxes.</text>
</comment>
<comment type="cofactor">
    <cofactor evidence="1">
        <name>Zn(2+)</name>
        <dbReference type="ChEBI" id="CHEBI:29105"/>
    </cofactor>
    <text evidence="1">Binds 1 zinc ion.</text>
</comment>
<comment type="similarity">
    <text evidence="1">Belongs to the NrdR family.</text>
</comment>
<reference key="1">
    <citation type="journal article" date="2005" name="Nucleic Acids Res.">
        <title>Genome dynamics and diversity of Shigella species, the etiologic agents of bacillary dysentery.</title>
        <authorList>
            <person name="Yang F."/>
            <person name="Yang J."/>
            <person name="Zhang X."/>
            <person name="Chen L."/>
            <person name="Jiang Y."/>
            <person name="Yan Y."/>
            <person name="Tang X."/>
            <person name="Wang J."/>
            <person name="Xiong Z."/>
            <person name="Dong J."/>
            <person name="Xue Y."/>
            <person name="Zhu Y."/>
            <person name="Xu X."/>
            <person name="Sun L."/>
            <person name="Chen S."/>
            <person name="Nie H."/>
            <person name="Peng J."/>
            <person name="Xu J."/>
            <person name="Wang Y."/>
            <person name="Yuan Z."/>
            <person name="Wen Y."/>
            <person name="Yao Z."/>
            <person name="Shen Y."/>
            <person name="Qiang B."/>
            <person name="Hou Y."/>
            <person name="Yu J."/>
            <person name="Jin Q."/>
        </authorList>
    </citation>
    <scope>NUCLEOTIDE SEQUENCE [LARGE SCALE GENOMIC DNA]</scope>
    <source>
        <strain>Sd197</strain>
    </source>
</reference>
<feature type="chain" id="PRO_0000230892" description="Transcriptional repressor NrdR">
    <location>
        <begin position="1"/>
        <end position="149"/>
    </location>
</feature>
<feature type="domain" description="ATP-cone" evidence="1">
    <location>
        <begin position="49"/>
        <end position="139"/>
    </location>
</feature>
<feature type="zinc finger region" evidence="1">
    <location>
        <begin position="3"/>
        <end position="34"/>
    </location>
</feature>
<proteinExistence type="inferred from homology"/>
<name>NRDR_SHIDS</name>
<sequence>MHCPFCFAVDTKVIDSRLVGEGSSVRRRRQCLVCNERFTTFEVAELVMPRVVKSNDVREPFNEEKLRSGMLRALEKRPVSSDDVEMAINHIKSQLRATGEREVPSKMIGNLVMEQLKKLDKVAYIRFASVYRSFEDIKEFGEEIARLED</sequence>
<accession>Q32JG7</accession>
<dbReference type="EMBL" id="CP000034">
    <property type="protein sequence ID" value="ABB60540.1"/>
    <property type="molecule type" value="Genomic_DNA"/>
</dbReference>
<dbReference type="RefSeq" id="WP_000543535.1">
    <property type="nucleotide sequence ID" value="NC_007606.1"/>
</dbReference>
<dbReference type="RefSeq" id="YP_402029.1">
    <property type="nucleotide sequence ID" value="NC_007606.1"/>
</dbReference>
<dbReference type="SMR" id="Q32JG7"/>
<dbReference type="STRING" id="300267.SDY_0321"/>
<dbReference type="EnsemblBacteria" id="ABB60540">
    <property type="protein sequence ID" value="ABB60540"/>
    <property type="gene ID" value="SDY_0321"/>
</dbReference>
<dbReference type="GeneID" id="93777047"/>
<dbReference type="KEGG" id="sdy:SDY_0321"/>
<dbReference type="PATRIC" id="fig|300267.13.peg.370"/>
<dbReference type="HOGENOM" id="CLU_108412_0_0_6"/>
<dbReference type="Proteomes" id="UP000002716">
    <property type="component" value="Chromosome"/>
</dbReference>
<dbReference type="GO" id="GO:0005524">
    <property type="term" value="F:ATP binding"/>
    <property type="evidence" value="ECO:0007669"/>
    <property type="project" value="UniProtKB-KW"/>
</dbReference>
<dbReference type="GO" id="GO:0003677">
    <property type="term" value="F:DNA binding"/>
    <property type="evidence" value="ECO:0007669"/>
    <property type="project" value="UniProtKB-KW"/>
</dbReference>
<dbReference type="GO" id="GO:0008270">
    <property type="term" value="F:zinc ion binding"/>
    <property type="evidence" value="ECO:0007669"/>
    <property type="project" value="UniProtKB-UniRule"/>
</dbReference>
<dbReference type="GO" id="GO:0045892">
    <property type="term" value="P:negative regulation of DNA-templated transcription"/>
    <property type="evidence" value="ECO:0007669"/>
    <property type="project" value="UniProtKB-UniRule"/>
</dbReference>
<dbReference type="HAMAP" id="MF_00440">
    <property type="entry name" value="NrdR"/>
    <property type="match status" value="1"/>
</dbReference>
<dbReference type="InterPro" id="IPR005144">
    <property type="entry name" value="ATP-cone_dom"/>
</dbReference>
<dbReference type="InterPro" id="IPR055173">
    <property type="entry name" value="NrdR-like_N"/>
</dbReference>
<dbReference type="InterPro" id="IPR003796">
    <property type="entry name" value="RNR_NrdR-like"/>
</dbReference>
<dbReference type="NCBIfam" id="TIGR00244">
    <property type="entry name" value="transcriptional regulator NrdR"/>
    <property type="match status" value="1"/>
</dbReference>
<dbReference type="PANTHER" id="PTHR30455">
    <property type="entry name" value="TRANSCRIPTIONAL REPRESSOR NRDR"/>
    <property type="match status" value="1"/>
</dbReference>
<dbReference type="PANTHER" id="PTHR30455:SF2">
    <property type="entry name" value="TRANSCRIPTIONAL REPRESSOR NRDR"/>
    <property type="match status" value="1"/>
</dbReference>
<dbReference type="Pfam" id="PF03477">
    <property type="entry name" value="ATP-cone"/>
    <property type="match status" value="1"/>
</dbReference>
<dbReference type="Pfam" id="PF22811">
    <property type="entry name" value="Zn_ribbon_NrdR"/>
    <property type="match status" value="1"/>
</dbReference>
<dbReference type="PROSITE" id="PS51161">
    <property type="entry name" value="ATP_CONE"/>
    <property type="match status" value="1"/>
</dbReference>
<protein>
    <recommendedName>
        <fullName evidence="1">Transcriptional repressor NrdR</fullName>
    </recommendedName>
</protein>
<keyword id="KW-0067">ATP-binding</keyword>
<keyword id="KW-0238">DNA-binding</keyword>
<keyword id="KW-0479">Metal-binding</keyword>
<keyword id="KW-0547">Nucleotide-binding</keyword>
<keyword id="KW-1185">Reference proteome</keyword>
<keyword id="KW-0678">Repressor</keyword>
<keyword id="KW-0804">Transcription</keyword>
<keyword id="KW-0805">Transcription regulation</keyword>
<keyword id="KW-0862">Zinc</keyword>
<keyword id="KW-0863">Zinc-finger</keyword>
<evidence type="ECO:0000255" key="1">
    <source>
        <dbReference type="HAMAP-Rule" id="MF_00440"/>
    </source>
</evidence>
<gene>
    <name evidence="1" type="primary">nrdR</name>
    <name type="ordered locus">SDY_0321</name>
</gene>
<organism>
    <name type="scientific">Shigella dysenteriae serotype 1 (strain Sd197)</name>
    <dbReference type="NCBI Taxonomy" id="300267"/>
    <lineage>
        <taxon>Bacteria</taxon>
        <taxon>Pseudomonadati</taxon>
        <taxon>Pseudomonadota</taxon>
        <taxon>Gammaproteobacteria</taxon>
        <taxon>Enterobacterales</taxon>
        <taxon>Enterobacteriaceae</taxon>
        <taxon>Shigella</taxon>
    </lineage>
</organism>